<accession>A7ZZ25</accession>
<reference key="1">
    <citation type="journal article" date="2008" name="J. Bacteriol.">
        <title>The pangenome structure of Escherichia coli: comparative genomic analysis of E. coli commensal and pathogenic isolates.</title>
        <authorList>
            <person name="Rasko D.A."/>
            <person name="Rosovitz M.J."/>
            <person name="Myers G.S.A."/>
            <person name="Mongodin E.F."/>
            <person name="Fricke W.F."/>
            <person name="Gajer P."/>
            <person name="Crabtree J."/>
            <person name="Sebaihia M."/>
            <person name="Thomson N.R."/>
            <person name="Chaudhuri R."/>
            <person name="Henderson I.R."/>
            <person name="Sperandio V."/>
            <person name="Ravel J."/>
        </authorList>
    </citation>
    <scope>NUCLEOTIDE SEQUENCE [LARGE SCALE GENOMIC DNA]</scope>
    <source>
        <strain>HS</strain>
    </source>
</reference>
<keyword id="KW-0007">Acetylation</keyword>
<name>YCEH_ECOHS</name>
<organism>
    <name type="scientific">Escherichia coli O9:H4 (strain HS)</name>
    <dbReference type="NCBI Taxonomy" id="331112"/>
    <lineage>
        <taxon>Bacteria</taxon>
        <taxon>Pseudomonadati</taxon>
        <taxon>Pseudomonadota</taxon>
        <taxon>Gammaproteobacteria</taxon>
        <taxon>Enterobacterales</taxon>
        <taxon>Enterobacteriaceae</taxon>
        <taxon>Escherichia</taxon>
    </lineage>
</organism>
<proteinExistence type="inferred from homology"/>
<protein>
    <recommendedName>
        <fullName evidence="1">UPF0502 protein YceH</fullName>
    </recommendedName>
</protein>
<comment type="similarity">
    <text evidence="1">Belongs to the UPF0502 family.</text>
</comment>
<gene>
    <name evidence="1" type="primary">yceH</name>
    <name type="ordered locus">EcHS_A1190</name>
</gene>
<evidence type="ECO:0000255" key="1">
    <source>
        <dbReference type="HAMAP-Rule" id="MF_01584"/>
    </source>
</evidence>
<dbReference type="EMBL" id="CP000802">
    <property type="protein sequence ID" value="ABV05529.1"/>
    <property type="molecule type" value="Genomic_DNA"/>
</dbReference>
<dbReference type="RefSeq" id="WP_000877116.1">
    <property type="nucleotide sequence ID" value="NC_009800.1"/>
</dbReference>
<dbReference type="SMR" id="A7ZZ25"/>
<dbReference type="KEGG" id="ecx:EcHS_A1190"/>
<dbReference type="HOGENOM" id="CLU_057831_2_0_6"/>
<dbReference type="FunFam" id="1.10.10.10:FF:000196">
    <property type="entry name" value="UPF0502 protein YceH"/>
    <property type="match status" value="1"/>
</dbReference>
<dbReference type="FunFam" id="1.10.10.10:FF:000241">
    <property type="entry name" value="UPF0502 protein YceH"/>
    <property type="match status" value="1"/>
</dbReference>
<dbReference type="Gene3D" id="1.10.10.10">
    <property type="entry name" value="Winged helix-like DNA-binding domain superfamily/Winged helix DNA-binding domain"/>
    <property type="match status" value="2"/>
</dbReference>
<dbReference type="HAMAP" id="MF_01584">
    <property type="entry name" value="UPF0502"/>
    <property type="match status" value="1"/>
</dbReference>
<dbReference type="InterPro" id="IPR007432">
    <property type="entry name" value="DUF480"/>
</dbReference>
<dbReference type="InterPro" id="IPR036388">
    <property type="entry name" value="WH-like_DNA-bd_sf"/>
</dbReference>
<dbReference type="InterPro" id="IPR036390">
    <property type="entry name" value="WH_DNA-bd_sf"/>
</dbReference>
<dbReference type="NCBIfam" id="NF008413">
    <property type="entry name" value="PRK11239.1"/>
    <property type="match status" value="1"/>
</dbReference>
<dbReference type="PANTHER" id="PTHR38768">
    <property type="entry name" value="UPF0502 PROTEIN YCEH"/>
    <property type="match status" value="1"/>
</dbReference>
<dbReference type="PANTHER" id="PTHR38768:SF1">
    <property type="entry name" value="UPF0502 PROTEIN YCEH"/>
    <property type="match status" value="1"/>
</dbReference>
<dbReference type="Pfam" id="PF04337">
    <property type="entry name" value="DUF480"/>
    <property type="match status" value="1"/>
</dbReference>
<dbReference type="SUPFAM" id="SSF46785">
    <property type="entry name" value="Winged helix' DNA-binding domain"/>
    <property type="match status" value="2"/>
</dbReference>
<feature type="chain" id="PRO_1000069295" description="UPF0502 protein YceH">
    <location>
        <begin position="1"/>
        <end position="215"/>
    </location>
</feature>
<feature type="modified residue" description="N6-acetyllysine" evidence="1">
    <location>
        <position position="80"/>
    </location>
</feature>
<sequence length="215" mass="24150">MKYQLTALEARVIGCLLEKQVTTPEQYPLSVNGVVTACNQKTNREPVMNLSESEVQEQLDNLVKRHYLRTVSGFGNRVTKYEQRFCNSEFGDLKLSAAEVALITTLLLRGAQTPGELRSRAARMYEFSDMAEVESTLEQLANREDGPFVVRLAREPGKRESRYMHLFSGEVEDQPAVTDMSNAVDGDLQARVEALEIEVAELKQRLDSLLAHLGD</sequence>